<gene>
    <name evidence="1" type="primary">nqrD</name>
    <name type="ordered locus">Shewmr7_0977</name>
</gene>
<comment type="function">
    <text evidence="1">NQR complex catalyzes the reduction of ubiquinone-1 to ubiquinol by two successive reactions, coupled with the transport of Na(+) ions from the cytoplasm to the periplasm. NqrA to NqrE are probably involved in the second step, the conversion of ubisemiquinone to ubiquinol.</text>
</comment>
<comment type="catalytic activity">
    <reaction evidence="1">
        <text>a ubiquinone + n Na(+)(in) + NADH + H(+) = a ubiquinol + n Na(+)(out) + NAD(+)</text>
        <dbReference type="Rhea" id="RHEA:47748"/>
        <dbReference type="Rhea" id="RHEA-COMP:9565"/>
        <dbReference type="Rhea" id="RHEA-COMP:9566"/>
        <dbReference type="ChEBI" id="CHEBI:15378"/>
        <dbReference type="ChEBI" id="CHEBI:16389"/>
        <dbReference type="ChEBI" id="CHEBI:17976"/>
        <dbReference type="ChEBI" id="CHEBI:29101"/>
        <dbReference type="ChEBI" id="CHEBI:57540"/>
        <dbReference type="ChEBI" id="CHEBI:57945"/>
        <dbReference type="EC" id="7.2.1.1"/>
    </reaction>
</comment>
<comment type="subunit">
    <text evidence="1">Composed of six subunits; NqrA, NqrB, NqrC, NqrD, NqrE and NqrF.</text>
</comment>
<comment type="subcellular location">
    <subcellularLocation>
        <location evidence="1">Cell inner membrane</location>
        <topology evidence="1">Multi-pass membrane protein</topology>
    </subcellularLocation>
</comment>
<comment type="similarity">
    <text evidence="1">Belongs to the NqrDE/RnfAE family.</text>
</comment>
<name>NQRD_SHESR</name>
<dbReference type="EC" id="7.2.1.1" evidence="1"/>
<dbReference type="EMBL" id="CP000444">
    <property type="protein sequence ID" value="ABI41976.1"/>
    <property type="molecule type" value="Genomic_DNA"/>
</dbReference>
<dbReference type="SMR" id="Q0HY29"/>
<dbReference type="KEGG" id="shm:Shewmr7_0977"/>
<dbReference type="HOGENOM" id="CLU_046659_1_1_6"/>
<dbReference type="GO" id="GO:0005886">
    <property type="term" value="C:plasma membrane"/>
    <property type="evidence" value="ECO:0007669"/>
    <property type="project" value="UniProtKB-SubCell"/>
</dbReference>
<dbReference type="GO" id="GO:0016655">
    <property type="term" value="F:oxidoreductase activity, acting on NAD(P)H, quinone or similar compound as acceptor"/>
    <property type="evidence" value="ECO:0007669"/>
    <property type="project" value="UniProtKB-UniRule"/>
</dbReference>
<dbReference type="GO" id="GO:0006814">
    <property type="term" value="P:sodium ion transport"/>
    <property type="evidence" value="ECO:0007669"/>
    <property type="project" value="UniProtKB-UniRule"/>
</dbReference>
<dbReference type="HAMAP" id="MF_00428">
    <property type="entry name" value="NqrD"/>
    <property type="match status" value="1"/>
</dbReference>
<dbReference type="InterPro" id="IPR011292">
    <property type="entry name" value="NqrD"/>
</dbReference>
<dbReference type="InterPro" id="IPR003667">
    <property type="entry name" value="NqrDE/RnfAE"/>
</dbReference>
<dbReference type="NCBIfam" id="TIGR01939">
    <property type="entry name" value="nqrD"/>
    <property type="match status" value="1"/>
</dbReference>
<dbReference type="NCBIfam" id="NF006777">
    <property type="entry name" value="PRK09292.1"/>
    <property type="match status" value="1"/>
</dbReference>
<dbReference type="NCBIfam" id="NF009070">
    <property type="entry name" value="PRK12405.1"/>
    <property type="match status" value="1"/>
</dbReference>
<dbReference type="PANTHER" id="PTHR30586">
    <property type="entry name" value="ELECTRON TRANSPORT COMPLEX PROTEIN RNFE"/>
    <property type="match status" value="1"/>
</dbReference>
<dbReference type="PANTHER" id="PTHR30586:SF1">
    <property type="entry name" value="NA(+)-TRANSLOCATING NADH-QUINONE REDUCTASE SUBUNIT D"/>
    <property type="match status" value="1"/>
</dbReference>
<dbReference type="Pfam" id="PF02508">
    <property type="entry name" value="Rnf-Nqr"/>
    <property type="match status" value="1"/>
</dbReference>
<dbReference type="PIRSF" id="PIRSF006102">
    <property type="entry name" value="NQR_DE"/>
    <property type="match status" value="1"/>
</dbReference>
<protein>
    <recommendedName>
        <fullName evidence="1">Na(+)-translocating NADH-quinone reductase subunit D</fullName>
        <shortName evidence="1">Na(+)-NQR subunit D</shortName>
        <shortName evidence="1">Na(+)-translocating NQR subunit D</shortName>
        <ecNumber evidence="1">7.2.1.1</ecNumber>
    </recommendedName>
    <alternativeName>
        <fullName evidence="1">NQR complex subunit D</fullName>
    </alternativeName>
    <alternativeName>
        <fullName evidence="1">NQR-1 subunit D</fullName>
    </alternativeName>
</protein>
<evidence type="ECO:0000255" key="1">
    <source>
        <dbReference type="HAMAP-Rule" id="MF_00428"/>
    </source>
</evidence>
<feature type="chain" id="PRO_1000060174" description="Na(+)-translocating NADH-quinone reductase subunit D">
    <location>
        <begin position="1"/>
        <end position="210"/>
    </location>
</feature>
<feature type="transmembrane region" description="Helical" evidence="1">
    <location>
        <begin position="14"/>
        <end position="34"/>
    </location>
</feature>
<feature type="transmembrane region" description="Helical" evidence="1">
    <location>
        <begin position="42"/>
        <end position="62"/>
    </location>
</feature>
<feature type="transmembrane region" description="Helical" evidence="1">
    <location>
        <begin position="72"/>
        <end position="92"/>
    </location>
</feature>
<feature type="transmembrane region" description="Helical" evidence="1">
    <location>
        <begin position="103"/>
        <end position="123"/>
    </location>
</feature>
<feature type="transmembrane region" description="Helical" evidence="1">
    <location>
        <begin position="131"/>
        <end position="151"/>
    </location>
</feature>
<feature type="transmembrane region" description="Helical" evidence="1">
    <location>
        <begin position="178"/>
        <end position="198"/>
    </location>
</feature>
<organism>
    <name type="scientific">Shewanella sp. (strain MR-7)</name>
    <dbReference type="NCBI Taxonomy" id="60481"/>
    <lineage>
        <taxon>Bacteria</taxon>
        <taxon>Pseudomonadati</taxon>
        <taxon>Pseudomonadota</taxon>
        <taxon>Gammaproteobacteria</taxon>
        <taxon>Alteromonadales</taxon>
        <taxon>Shewanellaceae</taxon>
        <taxon>Shewanella</taxon>
    </lineage>
</organism>
<accession>Q0HY29</accession>
<keyword id="KW-0997">Cell inner membrane</keyword>
<keyword id="KW-1003">Cell membrane</keyword>
<keyword id="KW-0406">Ion transport</keyword>
<keyword id="KW-0472">Membrane</keyword>
<keyword id="KW-0520">NAD</keyword>
<keyword id="KW-0915">Sodium</keyword>
<keyword id="KW-0739">Sodium transport</keyword>
<keyword id="KW-1278">Translocase</keyword>
<keyword id="KW-0812">Transmembrane</keyword>
<keyword id="KW-1133">Transmembrane helix</keyword>
<keyword id="KW-0813">Transport</keyword>
<keyword id="KW-0830">Ubiquinone</keyword>
<reference key="1">
    <citation type="submission" date="2006-08" db="EMBL/GenBank/DDBJ databases">
        <title>Complete sequence of chromosome 1 of Shewanella sp. MR-7.</title>
        <authorList>
            <person name="Copeland A."/>
            <person name="Lucas S."/>
            <person name="Lapidus A."/>
            <person name="Barry K."/>
            <person name="Detter J.C."/>
            <person name="Glavina del Rio T."/>
            <person name="Hammon N."/>
            <person name="Israni S."/>
            <person name="Dalin E."/>
            <person name="Tice H."/>
            <person name="Pitluck S."/>
            <person name="Kiss H."/>
            <person name="Brettin T."/>
            <person name="Bruce D."/>
            <person name="Han C."/>
            <person name="Tapia R."/>
            <person name="Gilna P."/>
            <person name="Schmutz J."/>
            <person name="Larimer F."/>
            <person name="Land M."/>
            <person name="Hauser L."/>
            <person name="Kyrpides N."/>
            <person name="Mikhailova N."/>
            <person name="Nealson K."/>
            <person name="Konstantinidis K."/>
            <person name="Klappenbach J."/>
            <person name="Tiedje J."/>
            <person name="Richardson P."/>
        </authorList>
    </citation>
    <scope>NUCLEOTIDE SEQUENCE [LARGE SCALE GENOMIC DNA]</scope>
    <source>
        <strain>MR-7</strain>
    </source>
</reference>
<sequence>MSDAKELKQVLTGPIVNNNPIALQVLGVCSALAVTSKLETALVMALALTAVTAFSNLFISMIRNHIPSSVRIIVQMTIIASLVIVVDQLLQAYAYQISKQLSVFVGLIITNCIVMGRAEAYAMKTPPMMSFMDGIGNGLGYGAILLAVGFVRELFGNGSLFGVQILHKISEGGWYQPNGLLLLPPSAFFLIGILIWIIRTYKPEQVEAKG</sequence>
<proteinExistence type="inferred from homology"/>